<dbReference type="EC" id="4.3.2.1" evidence="1"/>
<dbReference type="EMBL" id="CP000458">
    <property type="protein sequence ID" value="ABK09179.1"/>
    <property type="molecule type" value="Genomic_DNA"/>
</dbReference>
<dbReference type="RefSeq" id="WP_011545952.1">
    <property type="nucleotide sequence ID" value="NC_008542.1"/>
</dbReference>
<dbReference type="SMR" id="A0K9K2"/>
<dbReference type="KEGG" id="bch:Bcen2424_2429"/>
<dbReference type="HOGENOM" id="CLU_027272_2_3_4"/>
<dbReference type="UniPathway" id="UPA00068">
    <property type="reaction ID" value="UER00114"/>
</dbReference>
<dbReference type="GO" id="GO:0005829">
    <property type="term" value="C:cytosol"/>
    <property type="evidence" value="ECO:0007669"/>
    <property type="project" value="TreeGrafter"/>
</dbReference>
<dbReference type="GO" id="GO:0004056">
    <property type="term" value="F:argininosuccinate lyase activity"/>
    <property type="evidence" value="ECO:0007669"/>
    <property type="project" value="UniProtKB-UniRule"/>
</dbReference>
<dbReference type="GO" id="GO:0042450">
    <property type="term" value="P:arginine biosynthetic process via ornithine"/>
    <property type="evidence" value="ECO:0007669"/>
    <property type="project" value="InterPro"/>
</dbReference>
<dbReference type="GO" id="GO:0006526">
    <property type="term" value="P:L-arginine biosynthetic process"/>
    <property type="evidence" value="ECO:0007669"/>
    <property type="project" value="UniProtKB-UniRule"/>
</dbReference>
<dbReference type="CDD" id="cd01359">
    <property type="entry name" value="Argininosuccinate_lyase"/>
    <property type="match status" value="1"/>
</dbReference>
<dbReference type="FunFam" id="1.10.275.10:FF:000002">
    <property type="entry name" value="Argininosuccinate lyase"/>
    <property type="match status" value="1"/>
</dbReference>
<dbReference type="FunFam" id="1.10.40.30:FF:000001">
    <property type="entry name" value="Argininosuccinate lyase"/>
    <property type="match status" value="1"/>
</dbReference>
<dbReference type="FunFam" id="1.20.200.10:FF:000015">
    <property type="entry name" value="argininosuccinate lyase isoform X2"/>
    <property type="match status" value="1"/>
</dbReference>
<dbReference type="Gene3D" id="1.10.40.30">
    <property type="entry name" value="Fumarase/aspartase (C-terminal domain)"/>
    <property type="match status" value="1"/>
</dbReference>
<dbReference type="Gene3D" id="1.20.200.10">
    <property type="entry name" value="Fumarase/aspartase (Central domain)"/>
    <property type="match status" value="1"/>
</dbReference>
<dbReference type="Gene3D" id="1.10.275.10">
    <property type="entry name" value="Fumarase/aspartase (N-terminal domain)"/>
    <property type="match status" value="1"/>
</dbReference>
<dbReference type="HAMAP" id="MF_00006">
    <property type="entry name" value="Arg_succ_lyase"/>
    <property type="match status" value="1"/>
</dbReference>
<dbReference type="InterPro" id="IPR029419">
    <property type="entry name" value="Arg_succ_lyase_C"/>
</dbReference>
<dbReference type="InterPro" id="IPR009049">
    <property type="entry name" value="Argininosuccinate_lyase"/>
</dbReference>
<dbReference type="InterPro" id="IPR024083">
    <property type="entry name" value="Fumarase/histidase_N"/>
</dbReference>
<dbReference type="InterPro" id="IPR020557">
    <property type="entry name" value="Fumarate_lyase_CS"/>
</dbReference>
<dbReference type="InterPro" id="IPR000362">
    <property type="entry name" value="Fumarate_lyase_fam"/>
</dbReference>
<dbReference type="InterPro" id="IPR022761">
    <property type="entry name" value="Fumarate_lyase_N"/>
</dbReference>
<dbReference type="InterPro" id="IPR008948">
    <property type="entry name" value="L-Aspartase-like"/>
</dbReference>
<dbReference type="NCBIfam" id="TIGR00838">
    <property type="entry name" value="argH"/>
    <property type="match status" value="1"/>
</dbReference>
<dbReference type="PANTHER" id="PTHR43814">
    <property type="entry name" value="ARGININOSUCCINATE LYASE"/>
    <property type="match status" value="1"/>
</dbReference>
<dbReference type="PANTHER" id="PTHR43814:SF1">
    <property type="entry name" value="ARGININOSUCCINATE LYASE"/>
    <property type="match status" value="1"/>
</dbReference>
<dbReference type="Pfam" id="PF14698">
    <property type="entry name" value="ASL_C2"/>
    <property type="match status" value="1"/>
</dbReference>
<dbReference type="Pfam" id="PF00206">
    <property type="entry name" value="Lyase_1"/>
    <property type="match status" value="1"/>
</dbReference>
<dbReference type="PRINTS" id="PR00145">
    <property type="entry name" value="ARGSUCLYASE"/>
</dbReference>
<dbReference type="PRINTS" id="PR00149">
    <property type="entry name" value="FUMRATELYASE"/>
</dbReference>
<dbReference type="SUPFAM" id="SSF48557">
    <property type="entry name" value="L-aspartase-like"/>
    <property type="match status" value="1"/>
</dbReference>
<dbReference type="PROSITE" id="PS00163">
    <property type="entry name" value="FUMARATE_LYASES"/>
    <property type="match status" value="1"/>
</dbReference>
<protein>
    <recommendedName>
        <fullName evidence="1">Argininosuccinate lyase</fullName>
        <shortName evidence="1">ASAL</shortName>
        <ecNumber evidence="1">4.3.2.1</ecNumber>
    </recommendedName>
    <alternativeName>
        <fullName evidence="1">Arginosuccinase</fullName>
    </alternativeName>
</protein>
<sequence length="469" mass="51380">MTSQLHKKGEAWSARFSEPMSELVKRYTSSVFFDKRLALVDIAGSLAHANMLAAQKIINADDLAAIERGMAQIKGEIERGEFEWQLDLEDVHLNIEARLTALIGDAGKRLHTGRSRNDQVATDIRLWLRGEIDRIGGLLNDLRGALIDLAEQNADTIMPGFTHLQVAQPVTFGHHLLAYVEMFTRDAERMRDCRTRVNRLPLGAAALAGTSYPIDRHAVAKTLGFDGICANSLDAVSDRDFAIEFTAASALVMTHVSRFSEELVLWMSPRVGFIDIADRFCTGSSIMPQKKNPDVPELARGKTGRVNGHLMALLTLMKGQPLAYNKDNQEDKEPLFDTVDTVADTLRIFAEMVAGITVKPDAMRAAALQGFSTATDLADYLVKRGLPFRDAHEAVAHAVKICDDRGIDLADLTLDEMKQELPNVAHLIGDDVFGYLTLEGSVASRNHPGGTSPDQVRAAVKAARAALAK</sequence>
<proteinExistence type="inferred from homology"/>
<reference key="1">
    <citation type="submission" date="2006-08" db="EMBL/GenBank/DDBJ databases">
        <title>Complete sequence of chromosome 1 of Burkholderia cenocepacia HI2424.</title>
        <authorList>
            <person name="Copeland A."/>
            <person name="Lucas S."/>
            <person name="Lapidus A."/>
            <person name="Barry K."/>
            <person name="Detter J.C."/>
            <person name="Glavina del Rio T."/>
            <person name="Hammon N."/>
            <person name="Israni S."/>
            <person name="Pitluck S."/>
            <person name="Chain P."/>
            <person name="Malfatti S."/>
            <person name="Shin M."/>
            <person name="Vergez L."/>
            <person name="Schmutz J."/>
            <person name="Larimer F."/>
            <person name="Land M."/>
            <person name="Hauser L."/>
            <person name="Kyrpides N."/>
            <person name="Kim E."/>
            <person name="LiPuma J.J."/>
            <person name="Gonzalez C.F."/>
            <person name="Konstantinidis K."/>
            <person name="Tiedje J.M."/>
            <person name="Richardson P."/>
        </authorList>
    </citation>
    <scope>NUCLEOTIDE SEQUENCE [LARGE SCALE GENOMIC DNA]</scope>
    <source>
        <strain>HI2424</strain>
    </source>
</reference>
<evidence type="ECO:0000255" key="1">
    <source>
        <dbReference type="HAMAP-Rule" id="MF_00006"/>
    </source>
</evidence>
<comment type="catalytic activity">
    <reaction evidence="1">
        <text>2-(N(omega)-L-arginino)succinate = fumarate + L-arginine</text>
        <dbReference type="Rhea" id="RHEA:24020"/>
        <dbReference type="ChEBI" id="CHEBI:29806"/>
        <dbReference type="ChEBI" id="CHEBI:32682"/>
        <dbReference type="ChEBI" id="CHEBI:57472"/>
        <dbReference type="EC" id="4.3.2.1"/>
    </reaction>
</comment>
<comment type="pathway">
    <text evidence="1">Amino-acid biosynthesis; L-arginine biosynthesis; L-arginine from L-ornithine and carbamoyl phosphate: step 3/3.</text>
</comment>
<comment type="subcellular location">
    <subcellularLocation>
        <location evidence="1">Cytoplasm</location>
    </subcellularLocation>
</comment>
<comment type="similarity">
    <text evidence="1">Belongs to the lyase 1 family. Argininosuccinate lyase subfamily.</text>
</comment>
<gene>
    <name evidence="1" type="primary">argH</name>
    <name type="ordered locus">Bcen2424_2429</name>
</gene>
<organism>
    <name type="scientific">Burkholderia cenocepacia (strain HI2424)</name>
    <dbReference type="NCBI Taxonomy" id="331272"/>
    <lineage>
        <taxon>Bacteria</taxon>
        <taxon>Pseudomonadati</taxon>
        <taxon>Pseudomonadota</taxon>
        <taxon>Betaproteobacteria</taxon>
        <taxon>Burkholderiales</taxon>
        <taxon>Burkholderiaceae</taxon>
        <taxon>Burkholderia</taxon>
        <taxon>Burkholderia cepacia complex</taxon>
    </lineage>
</organism>
<name>ARLY_BURCH</name>
<accession>A0K9K2</accession>
<keyword id="KW-0028">Amino-acid biosynthesis</keyword>
<keyword id="KW-0055">Arginine biosynthesis</keyword>
<keyword id="KW-0963">Cytoplasm</keyword>
<keyword id="KW-0456">Lyase</keyword>
<feature type="chain" id="PRO_1000000457" description="Argininosuccinate lyase">
    <location>
        <begin position="1"/>
        <end position="469"/>
    </location>
</feature>